<evidence type="ECO:0000250" key="1"/>
<evidence type="ECO:0000255" key="2">
    <source>
        <dbReference type="HAMAP-Rule" id="MF_00047"/>
    </source>
</evidence>
<dbReference type="EC" id="6.3.2.4" evidence="2"/>
<dbReference type="EMBL" id="AJ938182">
    <property type="protein sequence ID" value="CAI81656.1"/>
    <property type="molecule type" value="Genomic_DNA"/>
</dbReference>
<dbReference type="RefSeq" id="WP_000159631.1">
    <property type="nucleotide sequence ID" value="NC_007622.1"/>
</dbReference>
<dbReference type="SMR" id="Q2YUH1"/>
<dbReference type="KEGG" id="sab:SAB1967c"/>
<dbReference type="HOGENOM" id="CLU_039268_0_0_9"/>
<dbReference type="UniPathway" id="UPA00219"/>
<dbReference type="GO" id="GO:0005829">
    <property type="term" value="C:cytosol"/>
    <property type="evidence" value="ECO:0007669"/>
    <property type="project" value="TreeGrafter"/>
</dbReference>
<dbReference type="GO" id="GO:0005524">
    <property type="term" value="F:ATP binding"/>
    <property type="evidence" value="ECO:0007669"/>
    <property type="project" value="UniProtKB-KW"/>
</dbReference>
<dbReference type="GO" id="GO:0008716">
    <property type="term" value="F:D-alanine-D-alanine ligase activity"/>
    <property type="evidence" value="ECO:0007669"/>
    <property type="project" value="UniProtKB-UniRule"/>
</dbReference>
<dbReference type="GO" id="GO:0046872">
    <property type="term" value="F:metal ion binding"/>
    <property type="evidence" value="ECO:0007669"/>
    <property type="project" value="UniProtKB-KW"/>
</dbReference>
<dbReference type="GO" id="GO:0071555">
    <property type="term" value="P:cell wall organization"/>
    <property type="evidence" value="ECO:0007669"/>
    <property type="project" value="UniProtKB-KW"/>
</dbReference>
<dbReference type="GO" id="GO:0009252">
    <property type="term" value="P:peptidoglycan biosynthetic process"/>
    <property type="evidence" value="ECO:0007669"/>
    <property type="project" value="UniProtKB-UniRule"/>
</dbReference>
<dbReference type="GO" id="GO:0008360">
    <property type="term" value="P:regulation of cell shape"/>
    <property type="evidence" value="ECO:0007669"/>
    <property type="project" value="UniProtKB-KW"/>
</dbReference>
<dbReference type="FunFam" id="3.30.1490.20:FF:000007">
    <property type="entry name" value="D-alanine--D-alanine ligase"/>
    <property type="match status" value="1"/>
</dbReference>
<dbReference type="FunFam" id="3.30.470.20:FF:000008">
    <property type="entry name" value="D-alanine--D-alanine ligase"/>
    <property type="match status" value="1"/>
</dbReference>
<dbReference type="FunFam" id="3.40.50.20:FF:000020">
    <property type="entry name" value="D-alanine--D-alanine ligase"/>
    <property type="match status" value="1"/>
</dbReference>
<dbReference type="Gene3D" id="3.40.50.20">
    <property type="match status" value="1"/>
</dbReference>
<dbReference type="Gene3D" id="3.30.1490.20">
    <property type="entry name" value="ATP-grasp fold, A domain"/>
    <property type="match status" value="1"/>
</dbReference>
<dbReference type="Gene3D" id="3.30.470.20">
    <property type="entry name" value="ATP-grasp fold, B domain"/>
    <property type="match status" value="1"/>
</dbReference>
<dbReference type="HAMAP" id="MF_00047">
    <property type="entry name" value="Dala_Dala_lig"/>
    <property type="match status" value="1"/>
</dbReference>
<dbReference type="InterPro" id="IPR011761">
    <property type="entry name" value="ATP-grasp"/>
</dbReference>
<dbReference type="InterPro" id="IPR013815">
    <property type="entry name" value="ATP_grasp_subdomain_1"/>
</dbReference>
<dbReference type="InterPro" id="IPR000291">
    <property type="entry name" value="D-Ala_lig_Van_CS"/>
</dbReference>
<dbReference type="InterPro" id="IPR005905">
    <property type="entry name" value="D_ala_D_ala"/>
</dbReference>
<dbReference type="InterPro" id="IPR011095">
    <property type="entry name" value="Dala_Dala_lig_C"/>
</dbReference>
<dbReference type="InterPro" id="IPR011127">
    <property type="entry name" value="Dala_Dala_lig_N"/>
</dbReference>
<dbReference type="InterPro" id="IPR016185">
    <property type="entry name" value="PreATP-grasp_dom_sf"/>
</dbReference>
<dbReference type="NCBIfam" id="TIGR01205">
    <property type="entry name" value="D_ala_D_alaTIGR"/>
    <property type="match status" value="1"/>
</dbReference>
<dbReference type="NCBIfam" id="NF002526">
    <property type="entry name" value="PRK01966.1-2"/>
    <property type="match status" value="1"/>
</dbReference>
<dbReference type="NCBIfam" id="NF002528">
    <property type="entry name" value="PRK01966.1-4"/>
    <property type="match status" value="1"/>
</dbReference>
<dbReference type="PANTHER" id="PTHR23132">
    <property type="entry name" value="D-ALANINE--D-ALANINE LIGASE"/>
    <property type="match status" value="1"/>
</dbReference>
<dbReference type="PANTHER" id="PTHR23132:SF25">
    <property type="entry name" value="D-ALANINE--D-ALANINE LIGASE A"/>
    <property type="match status" value="1"/>
</dbReference>
<dbReference type="Pfam" id="PF07478">
    <property type="entry name" value="Dala_Dala_lig_C"/>
    <property type="match status" value="1"/>
</dbReference>
<dbReference type="Pfam" id="PF01820">
    <property type="entry name" value="Dala_Dala_lig_N"/>
    <property type="match status" value="1"/>
</dbReference>
<dbReference type="PIRSF" id="PIRSF039102">
    <property type="entry name" value="Ddl/VanB"/>
    <property type="match status" value="1"/>
</dbReference>
<dbReference type="SUPFAM" id="SSF56059">
    <property type="entry name" value="Glutathione synthetase ATP-binding domain-like"/>
    <property type="match status" value="1"/>
</dbReference>
<dbReference type="SUPFAM" id="SSF52440">
    <property type="entry name" value="PreATP-grasp domain"/>
    <property type="match status" value="1"/>
</dbReference>
<dbReference type="PROSITE" id="PS50975">
    <property type="entry name" value="ATP_GRASP"/>
    <property type="match status" value="1"/>
</dbReference>
<dbReference type="PROSITE" id="PS00843">
    <property type="entry name" value="DALA_DALA_LIGASE_1"/>
    <property type="match status" value="1"/>
</dbReference>
<dbReference type="PROSITE" id="PS00844">
    <property type="entry name" value="DALA_DALA_LIGASE_2"/>
    <property type="match status" value="1"/>
</dbReference>
<feature type="chain" id="PRO_1000030495" description="D-alanine--D-alanine ligase">
    <location>
        <begin position="1"/>
        <end position="356"/>
    </location>
</feature>
<feature type="domain" description="ATP-grasp" evidence="2">
    <location>
        <begin position="134"/>
        <end position="339"/>
    </location>
</feature>
<feature type="binding site" evidence="2">
    <location>
        <begin position="167"/>
        <end position="222"/>
    </location>
    <ligand>
        <name>ATP</name>
        <dbReference type="ChEBI" id="CHEBI:30616"/>
    </ligand>
</feature>
<feature type="binding site" evidence="2">
    <location>
        <position position="293"/>
    </location>
    <ligand>
        <name>Mg(2+)</name>
        <dbReference type="ChEBI" id="CHEBI:18420"/>
        <label>1</label>
    </ligand>
</feature>
<feature type="binding site" evidence="2">
    <location>
        <position position="306"/>
    </location>
    <ligand>
        <name>Mg(2+)</name>
        <dbReference type="ChEBI" id="CHEBI:18420"/>
        <label>1</label>
    </ligand>
</feature>
<feature type="binding site" evidence="2">
    <location>
        <position position="306"/>
    </location>
    <ligand>
        <name>Mg(2+)</name>
        <dbReference type="ChEBI" id="CHEBI:18420"/>
        <label>2</label>
    </ligand>
</feature>
<feature type="binding site" evidence="2">
    <location>
        <position position="308"/>
    </location>
    <ligand>
        <name>Mg(2+)</name>
        <dbReference type="ChEBI" id="CHEBI:18420"/>
        <label>2</label>
    </ligand>
</feature>
<accession>Q2YUH1</accession>
<comment type="function">
    <text evidence="2">Cell wall formation.</text>
</comment>
<comment type="catalytic activity">
    <reaction evidence="2">
        <text>2 D-alanine + ATP = D-alanyl-D-alanine + ADP + phosphate + H(+)</text>
        <dbReference type="Rhea" id="RHEA:11224"/>
        <dbReference type="ChEBI" id="CHEBI:15378"/>
        <dbReference type="ChEBI" id="CHEBI:30616"/>
        <dbReference type="ChEBI" id="CHEBI:43474"/>
        <dbReference type="ChEBI" id="CHEBI:57416"/>
        <dbReference type="ChEBI" id="CHEBI:57822"/>
        <dbReference type="ChEBI" id="CHEBI:456216"/>
        <dbReference type="EC" id="6.3.2.4"/>
    </reaction>
</comment>
<comment type="cofactor">
    <cofactor evidence="1">
        <name>Mg(2+)</name>
        <dbReference type="ChEBI" id="CHEBI:18420"/>
    </cofactor>
    <cofactor evidence="1">
        <name>Mn(2+)</name>
        <dbReference type="ChEBI" id="CHEBI:29035"/>
    </cofactor>
    <text evidence="1">Binds 2 magnesium or manganese ions per subunit.</text>
</comment>
<comment type="pathway">
    <text evidence="2">Cell wall biogenesis; peptidoglycan biosynthesis.</text>
</comment>
<comment type="subcellular location">
    <subcellularLocation>
        <location evidence="2">Cytoplasm</location>
    </subcellularLocation>
</comment>
<comment type="similarity">
    <text evidence="2">Belongs to the D-alanine--D-alanine ligase family.</text>
</comment>
<gene>
    <name evidence="2" type="primary">ddl</name>
    <name type="ordered locus">SAB1967c</name>
</gene>
<proteinExistence type="inferred from homology"/>
<organism>
    <name type="scientific">Staphylococcus aureus (strain bovine RF122 / ET3-1)</name>
    <dbReference type="NCBI Taxonomy" id="273036"/>
    <lineage>
        <taxon>Bacteria</taxon>
        <taxon>Bacillati</taxon>
        <taxon>Bacillota</taxon>
        <taxon>Bacilli</taxon>
        <taxon>Bacillales</taxon>
        <taxon>Staphylococcaceae</taxon>
        <taxon>Staphylococcus</taxon>
    </lineage>
</organism>
<keyword id="KW-0067">ATP-binding</keyword>
<keyword id="KW-0133">Cell shape</keyword>
<keyword id="KW-0961">Cell wall biogenesis/degradation</keyword>
<keyword id="KW-0963">Cytoplasm</keyword>
<keyword id="KW-0436">Ligase</keyword>
<keyword id="KW-0460">Magnesium</keyword>
<keyword id="KW-0464">Manganese</keyword>
<keyword id="KW-0479">Metal-binding</keyword>
<keyword id="KW-0547">Nucleotide-binding</keyword>
<keyword id="KW-0573">Peptidoglycan synthesis</keyword>
<sequence>MTKENICIVFGGKSAEHEVSILTAQNVLNAIDKDKYHVDIIYITNDGDWRKQNNITAEIKSTDELHLENGEALEISQLLKESSSGQPYDAVFPLLHGPNGEDGTIQGLFEVLDVPYVGNGVLSAASSMDKLVMKQLFEHRGLPQLPYISFLRSEYEKYEHNILKLVNDKLNYPVFVKPANLGSSVGISKCNNEAELKEGIKEAFQFDRKLVIEQGVNAREIEVAVLGNDYPEATWPGEVVKDVAFYDYKSKYKDGKVQLQIPADLDEDVQLTLRNMALEAFKATDCSGLVRADFFVTEDNQIYINETNAMPGFTAFSMYPKLWENMGLSYPELITKLIELAKERHQDKQKNKYKID</sequence>
<reference key="1">
    <citation type="journal article" date="2007" name="PLoS ONE">
        <title>Molecular correlates of host specialization in Staphylococcus aureus.</title>
        <authorList>
            <person name="Herron-Olson L."/>
            <person name="Fitzgerald J.R."/>
            <person name="Musser J.M."/>
            <person name="Kapur V."/>
        </authorList>
    </citation>
    <scope>NUCLEOTIDE SEQUENCE [LARGE SCALE GENOMIC DNA]</scope>
    <source>
        <strain>bovine RF122 / ET3-1</strain>
    </source>
</reference>
<protein>
    <recommendedName>
        <fullName evidence="2">D-alanine--D-alanine ligase</fullName>
        <ecNumber evidence="2">6.3.2.4</ecNumber>
    </recommendedName>
    <alternativeName>
        <fullName evidence="2">D-Ala-D-Ala ligase</fullName>
    </alternativeName>
    <alternativeName>
        <fullName evidence="2">D-alanylalanine synthetase</fullName>
    </alternativeName>
</protein>
<name>DDL_STAAB</name>